<gene>
    <name evidence="1" type="primary">trpB</name>
    <name type="ordered locus">M446_2507</name>
</gene>
<evidence type="ECO:0000255" key="1">
    <source>
        <dbReference type="HAMAP-Rule" id="MF_00133"/>
    </source>
</evidence>
<organism>
    <name type="scientific">Methylobacterium sp. (strain 4-46)</name>
    <dbReference type="NCBI Taxonomy" id="426117"/>
    <lineage>
        <taxon>Bacteria</taxon>
        <taxon>Pseudomonadati</taxon>
        <taxon>Pseudomonadota</taxon>
        <taxon>Alphaproteobacteria</taxon>
        <taxon>Hyphomicrobiales</taxon>
        <taxon>Methylobacteriaceae</taxon>
        <taxon>Methylobacterium</taxon>
    </lineage>
</organism>
<dbReference type="EC" id="4.2.1.20" evidence="1"/>
<dbReference type="EMBL" id="CP000943">
    <property type="protein sequence ID" value="ACA16959.1"/>
    <property type="molecule type" value="Genomic_DNA"/>
</dbReference>
<dbReference type="RefSeq" id="WP_012332366.1">
    <property type="nucleotide sequence ID" value="NC_010511.1"/>
</dbReference>
<dbReference type="SMR" id="B0UIA8"/>
<dbReference type="STRING" id="426117.M446_2507"/>
<dbReference type="KEGG" id="met:M446_2507"/>
<dbReference type="eggNOG" id="COG0133">
    <property type="taxonomic scope" value="Bacteria"/>
</dbReference>
<dbReference type="HOGENOM" id="CLU_016734_3_1_5"/>
<dbReference type="UniPathway" id="UPA00035">
    <property type="reaction ID" value="UER00044"/>
</dbReference>
<dbReference type="GO" id="GO:0005737">
    <property type="term" value="C:cytoplasm"/>
    <property type="evidence" value="ECO:0007669"/>
    <property type="project" value="TreeGrafter"/>
</dbReference>
<dbReference type="GO" id="GO:0004834">
    <property type="term" value="F:tryptophan synthase activity"/>
    <property type="evidence" value="ECO:0007669"/>
    <property type="project" value="UniProtKB-UniRule"/>
</dbReference>
<dbReference type="CDD" id="cd06446">
    <property type="entry name" value="Trp-synth_B"/>
    <property type="match status" value="1"/>
</dbReference>
<dbReference type="FunFam" id="3.40.50.1100:FF:000001">
    <property type="entry name" value="Tryptophan synthase beta chain"/>
    <property type="match status" value="1"/>
</dbReference>
<dbReference type="FunFam" id="3.40.50.1100:FF:000004">
    <property type="entry name" value="Tryptophan synthase beta chain"/>
    <property type="match status" value="1"/>
</dbReference>
<dbReference type="Gene3D" id="3.40.50.1100">
    <property type="match status" value="2"/>
</dbReference>
<dbReference type="HAMAP" id="MF_00133">
    <property type="entry name" value="Trp_synth_beta"/>
    <property type="match status" value="1"/>
</dbReference>
<dbReference type="InterPro" id="IPR006653">
    <property type="entry name" value="Trp_synth_b_CS"/>
</dbReference>
<dbReference type="InterPro" id="IPR006654">
    <property type="entry name" value="Trp_synth_beta"/>
</dbReference>
<dbReference type="InterPro" id="IPR023026">
    <property type="entry name" value="Trp_synth_beta/beta-like"/>
</dbReference>
<dbReference type="InterPro" id="IPR001926">
    <property type="entry name" value="TrpB-like_PALP"/>
</dbReference>
<dbReference type="InterPro" id="IPR036052">
    <property type="entry name" value="TrpB-like_PALP_sf"/>
</dbReference>
<dbReference type="NCBIfam" id="TIGR00263">
    <property type="entry name" value="trpB"/>
    <property type="match status" value="1"/>
</dbReference>
<dbReference type="PANTHER" id="PTHR48077:SF3">
    <property type="entry name" value="TRYPTOPHAN SYNTHASE"/>
    <property type="match status" value="1"/>
</dbReference>
<dbReference type="PANTHER" id="PTHR48077">
    <property type="entry name" value="TRYPTOPHAN SYNTHASE-RELATED"/>
    <property type="match status" value="1"/>
</dbReference>
<dbReference type="Pfam" id="PF00291">
    <property type="entry name" value="PALP"/>
    <property type="match status" value="1"/>
</dbReference>
<dbReference type="PIRSF" id="PIRSF001413">
    <property type="entry name" value="Trp_syn_beta"/>
    <property type="match status" value="1"/>
</dbReference>
<dbReference type="SUPFAM" id="SSF53686">
    <property type="entry name" value="Tryptophan synthase beta subunit-like PLP-dependent enzymes"/>
    <property type="match status" value="1"/>
</dbReference>
<dbReference type="PROSITE" id="PS00168">
    <property type="entry name" value="TRP_SYNTHASE_BETA"/>
    <property type="match status" value="1"/>
</dbReference>
<protein>
    <recommendedName>
        <fullName evidence="1">Tryptophan synthase beta chain</fullName>
        <ecNumber evidence="1">4.2.1.20</ecNumber>
    </recommendedName>
</protein>
<comment type="function">
    <text evidence="1">The beta subunit is responsible for the synthesis of L-tryptophan from indole and L-serine.</text>
</comment>
<comment type="catalytic activity">
    <reaction evidence="1">
        <text>(1S,2R)-1-C-(indol-3-yl)glycerol 3-phosphate + L-serine = D-glyceraldehyde 3-phosphate + L-tryptophan + H2O</text>
        <dbReference type="Rhea" id="RHEA:10532"/>
        <dbReference type="ChEBI" id="CHEBI:15377"/>
        <dbReference type="ChEBI" id="CHEBI:33384"/>
        <dbReference type="ChEBI" id="CHEBI:57912"/>
        <dbReference type="ChEBI" id="CHEBI:58866"/>
        <dbReference type="ChEBI" id="CHEBI:59776"/>
        <dbReference type="EC" id="4.2.1.20"/>
    </reaction>
</comment>
<comment type="cofactor">
    <cofactor evidence="1">
        <name>pyridoxal 5'-phosphate</name>
        <dbReference type="ChEBI" id="CHEBI:597326"/>
    </cofactor>
</comment>
<comment type="pathway">
    <text evidence="1">Amino-acid biosynthesis; L-tryptophan biosynthesis; L-tryptophan from chorismate: step 5/5.</text>
</comment>
<comment type="subunit">
    <text evidence="1">Tetramer of two alpha and two beta chains.</text>
</comment>
<comment type="similarity">
    <text evidence="1">Belongs to the TrpB family.</text>
</comment>
<keyword id="KW-0028">Amino-acid biosynthesis</keyword>
<keyword id="KW-0057">Aromatic amino acid biosynthesis</keyword>
<keyword id="KW-0456">Lyase</keyword>
<keyword id="KW-0663">Pyridoxal phosphate</keyword>
<keyword id="KW-0822">Tryptophan biosynthesis</keyword>
<feature type="chain" id="PRO_1000198751" description="Tryptophan synthase beta chain">
    <location>
        <begin position="1"/>
        <end position="406"/>
    </location>
</feature>
<feature type="modified residue" description="N6-(pyridoxal phosphate)lysine" evidence="1">
    <location>
        <position position="99"/>
    </location>
</feature>
<reference key="1">
    <citation type="submission" date="2008-02" db="EMBL/GenBank/DDBJ databases">
        <title>Complete sequence of chromosome of Methylobacterium sp. 4-46.</title>
        <authorList>
            <consortium name="US DOE Joint Genome Institute"/>
            <person name="Copeland A."/>
            <person name="Lucas S."/>
            <person name="Lapidus A."/>
            <person name="Glavina del Rio T."/>
            <person name="Dalin E."/>
            <person name="Tice H."/>
            <person name="Bruce D."/>
            <person name="Goodwin L."/>
            <person name="Pitluck S."/>
            <person name="Chertkov O."/>
            <person name="Brettin T."/>
            <person name="Detter J.C."/>
            <person name="Han C."/>
            <person name="Kuske C.R."/>
            <person name="Schmutz J."/>
            <person name="Larimer F."/>
            <person name="Land M."/>
            <person name="Hauser L."/>
            <person name="Kyrpides N."/>
            <person name="Ivanova N."/>
            <person name="Marx C.J."/>
            <person name="Richardson P."/>
        </authorList>
    </citation>
    <scope>NUCLEOTIDE SEQUENCE [LARGE SCALE GENOMIC DNA]</scope>
    <source>
        <strain>4-46</strain>
    </source>
</reference>
<name>TRPB_METS4</name>
<proteinExistence type="inferred from homology"/>
<accession>B0UIA8</accession>
<sequence length="406" mass="43944">MNAPQTPNSFRTGPDERGRFGIFGGRFVAETLMPNILELERAYAEAKADPAFQGEMNAYLTHYVGRPSPLYFAERLSAHFGGAKIYFKREELNHTGSHKVNNVLGQILLARRMGKPRIIAETGAGQHGVATATLCARFGLKCVVYMGAVDVERQKPNVFRMKMLGAEVVPVQSGTRTLKDAMNEALRDWVTNVADTFYCIGTVAGPHPYPAMVRDFQSVIGRETREQMLAQEGRLPDSLVACIGGGSNAMGLFHPFLDDREIEIYGVEAAGHGVSSGLHAASLTGGKPGVLHGNRTYLLMNEDGQIADAHSISAGLDYPGIGPEHAWLHEVGRVTYLSATDSETLEAFRLCSLMEGIIPALEPAHALAKVAELAPTKPRDHLMVVNLSGRGDKDIPQVAEILGDAL</sequence>